<keyword id="KW-1185">Reference proteome</keyword>
<gene>
    <name type="primary">US31</name>
</gene>
<dbReference type="EMBL" id="X04650">
    <property type="protein sequence ID" value="CAA28342.1"/>
    <property type="molecule type" value="Genomic_DNA"/>
</dbReference>
<dbReference type="EMBL" id="X17403">
    <property type="protein sequence ID" value="CAA35263.1"/>
    <property type="status" value="ALT_INIT"/>
    <property type="molecule type" value="Genomic_DNA"/>
</dbReference>
<dbReference type="EMBL" id="BK000394">
    <property type="protein sequence ID" value="DAA00219.1"/>
    <property type="molecule type" value="Genomic_DNA"/>
</dbReference>
<dbReference type="PIR" id="S09945">
    <property type="entry name" value="QQBED6"/>
</dbReference>
<dbReference type="RefSeq" id="YP_081615.1">
    <property type="nucleotide sequence ID" value="NC_006273.2"/>
</dbReference>
<dbReference type="DNASU" id="3077573"/>
<dbReference type="GeneID" id="3077573"/>
<dbReference type="KEGG" id="vg:3077573"/>
<dbReference type="Proteomes" id="UP000008991">
    <property type="component" value="Segment"/>
</dbReference>
<dbReference type="Proteomes" id="UP000008992">
    <property type="component" value="Segment"/>
</dbReference>
<protein>
    <recommendedName>
        <fullName>Uncharacterized protein HHRF6</fullName>
    </recommendedName>
</protein>
<organism>
    <name type="scientific">Human cytomegalovirus (strain AD169)</name>
    <name type="common">HHV-5</name>
    <name type="synonym">Human herpesvirus 5</name>
    <dbReference type="NCBI Taxonomy" id="10360"/>
    <lineage>
        <taxon>Viruses</taxon>
        <taxon>Duplodnaviria</taxon>
        <taxon>Heunggongvirae</taxon>
        <taxon>Peploviricota</taxon>
        <taxon>Herviviricetes</taxon>
        <taxon>Herpesvirales</taxon>
        <taxon>Orthoherpesviridae</taxon>
        <taxon>Betaherpesvirinae</taxon>
        <taxon>Cytomegalovirus</taxon>
        <taxon>Cytomegalovirus humanbeta5</taxon>
        <taxon>Human cytomegalovirus</taxon>
    </lineage>
</organism>
<feature type="chain" id="PRO_0000115291" description="Uncharacterized protein HHRF6">
    <location>
        <begin position="1"/>
        <end position="161"/>
    </location>
</feature>
<feature type="region of interest" description="Disordered" evidence="1">
    <location>
        <begin position="126"/>
        <end position="161"/>
    </location>
</feature>
<feature type="compositionally biased region" description="Low complexity" evidence="1">
    <location>
        <begin position="128"/>
        <end position="148"/>
    </location>
</feature>
<organismHost>
    <name type="scientific">Homo sapiens</name>
    <name type="common">Human</name>
    <dbReference type="NCBI Taxonomy" id="9606"/>
</organismHost>
<comment type="similarity">
    <text evidence="2">Belongs to the herpesviridae US1 family.</text>
</comment>
<comment type="sequence caution" evidence="2">
    <conflict type="erroneous initiation">
        <sequence resource="EMBL-CDS" id="CAA35263"/>
    </conflict>
</comment>
<accession>P09707</accession>
<accession>Q7M6G9</accession>
<name>US31_HCMVA</name>
<evidence type="ECO:0000256" key="1">
    <source>
        <dbReference type="SAM" id="MobiDB-lite"/>
    </source>
</evidence>
<evidence type="ECO:0000305" key="2"/>
<proteinExistence type="inferred from homology"/>
<sequence>MSLLEREESWRRVVDYSHNLWCTCGNWQSHVEIQDEEPNCEQPEPAHWLEYVAVQWQARVRDSHDRWCLCNAWRDHALRGRWGTAYSSGSSASSSGFVAESKFTWWKRLRHSTRRWLFRRRRARYTPSNCGESSTSSGQSSGDESNCSLRTHGVYTRGEQH</sequence>
<reference key="1">
    <citation type="journal article" date="1986" name="J. Mol. Biol.">
        <title>Sequence of the short unique region, short repeats, and part of the long repeats of human cytomegalovirus.</title>
        <authorList>
            <person name="Weston K.M."/>
            <person name="Barrell B.G."/>
        </authorList>
    </citation>
    <scope>NUCLEOTIDE SEQUENCE [GENOMIC DNA]</scope>
</reference>
<reference key="2">
    <citation type="journal article" date="1990" name="Curr. Top. Microbiol. Immunol.">
        <title>Analysis of the protein-coding content of the sequence of human cytomegalovirus strain AD169.</title>
        <authorList>
            <person name="Chee M.S."/>
            <person name="Bankier A.T."/>
            <person name="Beck S."/>
            <person name="Bohni R."/>
            <person name="Brown C.M."/>
            <person name="Cerny R."/>
            <person name="Horsnell T."/>
            <person name="Hutchison C.A. III"/>
            <person name="Kouzarides T."/>
            <person name="Martignetti J.A."/>
            <person name="Preddie E."/>
            <person name="Satchwell S.C."/>
            <person name="Tomlinson P."/>
            <person name="Weston K.M."/>
            <person name="Barrell B.G."/>
        </authorList>
    </citation>
    <scope>NUCLEOTIDE SEQUENCE [LARGE SCALE GENOMIC DNA]</scope>
</reference>
<reference key="3">
    <citation type="journal article" date="2003" name="J. Gen. Virol.">
        <title>The human cytomegalovirus genome revisited: comparison with the chimpanzee cytomegalovirus genome.</title>
        <authorList>
            <person name="Davison A.J."/>
            <person name="Dolan A."/>
            <person name="Akter P."/>
            <person name="Addison C."/>
            <person name="Dargan D.J."/>
            <person name="Alcendor D.J."/>
            <person name="McGeoch D.J."/>
            <person name="Hayward G.S."/>
        </authorList>
    </citation>
    <scope>GENOME REANNOTATION</scope>
</reference>
<reference key="4">
    <citation type="journal article" date="2003" name="J. Gen. Virol.">
        <authorList>
            <person name="Davison A.J."/>
            <person name="Dolan A."/>
            <person name="Akter P."/>
            <person name="Addison C."/>
            <person name="Dargan D.J."/>
            <person name="Alcendor D.J."/>
            <person name="McGeoch D.J."/>
            <person name="Hayward G.S."/>
        </authorList>
    </citation>
    <scope>ERRATUM OF PUBMED:12533697</scope>
</reference>